<evidence type="ECO:0000250" key="1"/>
<evidence type="ECO:0000250" key="2">
    <source>
        <dbReference type="UniProtKB" id="P68363"/>
    </source>
</evidence>
<evidence type="ECO:0000305" key="3"/>
<protein>
    <recommendedName>
        <fullName>Tubulin alpha chain</fullName>
        <ecNumber evidence="2">3.6.5.-</ecNumber>
    </recommendedName>
</protein>
<comment type="function">
    <text>Tubulin is the major constituent of microtubules, a cylinder consisting of laterally associated linear protofilaments composed of alpha- and beta-tubulin heterodimers. Microtubules grow by the addition of GTP-tubulin dimers to the microtubule end, where a stabilizing cap forms. Below the cap, tubulin dimers are in GDP-bound state, owing to GTPase activity of alpha-tubulin.</text>
</comment>
<comment type="catalytic activity">
    <reaction evidence="2">
        <text>GTP + H2O = GDP + phosphate + H(+)</text>
        <dbReference type="Rhea" id="RHEA:19669"/>
        <dbReference type="ChEBI" id="CHEBI:15377"/>
        <dbReference type="ChEBI" id="CHEBI:15378"/>
        <dbReference type="ChEBI" id="CHEBI:37565"/>
        <dbReference type="ChEBI" id="CHEBI:43474"/>
        <dbReference type="ChEBI" id="CHEBI:58189"/>
    </reaction>
    <physiologicalReaction direction="left-to-right" evidence="2">
        <dbReference type="Rhea" id="RHEA:19670"/>
    </physiologicalReaction>
</comment>
<comment type="cofactor">
    <cofactor evidence="2">
        <name>Mg(2+)</name>
        <dbReference type="ChEBI" id="CHEBI:18420"/>
    </cofactor>
</comment>
<comment type="subunit">
    <text>Dimer of alpha and beta chains. A typical microtubule is a hollow water-filled tube with an outer diameter of 25 nm and an inner diameter of 15 nM. Alpha-beta heterodimers associate head-to-tail to form protofilaments running lengthwise along the microtubule wall with the beta-tubulin subunit facing the microtubule plus end conferring a structural polarity. Microtubules usually have 13 protofilaments but different protofilament numbers can be found in some organisms and specialized cells.</text>
</comment>
<comment type="subcellular location">
    <subcellularLocation>
        <location>Cytoplasm</location>
        <location>Cytoskeleton</location>
    </subcellularLocation>
</comment>
<comment type="similarity">
    <text evidence="3">Belongs to the tubulin family.</text>
</comment>
<gene>
    <name type="primary">TUB1</name>
</gene>
<name>TBA1_PNECA</name>
<feature type="chain" id="PRO_0000048219" description="Tubulin alpha chain">
    <location>
        <begin position="1"/>
        <end position="449"/>
    </location>
</feature>
<feature type="active site" evidence="2">
    <location>
        <position position="254"/>
    </location>
</feature>
<feature type="binding site" evidence="2">
    <location>
        <position position="11"/>
    </location>
    <ligand>
        <name>GTP</name>
        <dbReference type="ChEBI" id="CHEBI:37565"/>
    </ligand>
</feature>
<feature type="binding site" evidence="2">
    <location>
        <position position="71"/>
    </location>
    <ligand>
        <name>GTP</name>
        <dbReference type="ChEBI" id="CHEBI:37565"/>
    </ligand>
</feature>
<feature type="binding site" evidence="2">
    <location>
        <position position="71"/>
    </location>
    <ligand>
        <name>Mg(2+)</name>
        <dbReference type="ChEBI" id="CHEBI:18420"/>
    </ligand>
</feature>
<feature type="binding site" evidence="2">
    <location>
        <position position="140"/>
    </location>
    <ligand>
        <name>GTP</name>
        <dbReference type="ChEBI" id="CHEBI:37565"/>
    </ligand>
</feature>
<feature type="binding site" evidence="2">
    <location>
        <position position="144"/>
    </location>
    <ligand>
        <name>GTP</name>
        <dbReference type="ChEBI" id="CHEBI:37565"/>
    </ligand>
</feature>
<feature type="binding site" evidence="2">
    <location>
        <position position="145"/>
    </location>
    <ligand>
        <name>GTP</name>
        <dbReference type="ChEBI" id="CHEBI:37565"/>
    </ligand>
</feature>
<feature type="binding site" evidence="2">
    <location>
        <position position="179"/>
    </location>
    <ligand>
        <name>GTP</name>
        <dbReference type="ChEBI" id="CHEBI:37565"/>
    </ligand>
</feature>
<feature type="binding site" evidence="2">
    <location>
        <position position="206"/>
    </location>
    <ligand>
        <name>GTP</name>
        <dbReference type="ChEBI" id="CHEBI:37565"/>
    </ligand>
</feature>
<feature type="binding site" evidence="2">
    <location>
        <position position="228"/>
    </location>
    <ligand>
        <name>GTP</name>
        <dbReference type="ChEBI" id="CHEBI:37565"/>
    </ligand>
</feature>
<feature type="site" description="Involved in polymerization" evidence="1">
    <location>
        <position position="449"/>
    </location>
</feature>
<dbReference type="EC" id="3.6.5.-" evidence="2"/>
<dbReference type="EMBL" id="M95294">
    <property type="protein sequence ID" value="AAA33783.1"/>
    <property type="molecule type" value="Genomic_DNA"/>
</dbReference>
<dbReference type="PIR" id="JU0154">
    <property type="entry name" value="JU0154"/>
</dbReference>
<dbReference type="SMR" id="P53372"/>
<dbReference type="VEuPathDB" id="FungiDB:T552_02623"/>
<dbReference type="GO" id="GO:0005737">
    <property type="term" value="C:cytoplasm"/>
    <property type="evidence" value="ECO:0007669"/>
    <property type="project" value="UniProtKB-KW"/>
</dbReference>
<dbReference type="GO" id="GO:0005874">
    <property type="term" value="C:microtubule"/>
    <property type="evidence" value="ECO:0007669"/>
    <property type="project" value="UniProtKB-KW"/>
</dbReference>
<dbReference type="GO" id="GO:0005525">
    <property type="term" value="F:GTP binding"/>
    <property type="evidence" value="ECO:0007669"/>
    <property type="project" value="UniProtKB-KW"/>
</dbReference>
<dbReference type="GO" id="GO:0016787">
    <property type="term" value="F:hydrolase activity"/>
    <property type="evidence" value="ECO:0007669"/>
    <property type="project" value="UniProtKB-KW"/>
</dbReference>
<dbReference type="GO" id="GO:0046872">
    <property type="term" value="F:metal ion binding"/>
    <property type="evidence" value="ECO:0007669"/>
    <property type="project" value="UniProtKB-KW"/>
</dbReference>
<dbReference type="GO" id="GO:0005200">
    <property type="term" value="F:structural constituent of cytoskeleton"/>
    <property type="evidence" value="ECO:0007669"/>
    <property type="project" value="InterPro"/>
</dbReference>
<dbReference type="GO" id="GO:0007017">
    <property type="term" value="P:microtubule-based process"/>
    <property type="evidence" value="ECO:0007669"/>
    <property type="project" value="InterPro"/>
</dbReference>
<dbReference type="CDD" id="cd02186">
    <property type="entry name" value="alpha_tubulin"/>
    <property type="match status" value="1"/>
</dbReference>
<dbReference type="FunFam" id="1.10.287.600:FF:000005">
    <property type="entry name" value="Tubulin alpha chain"/>
    <property type="match status" value="1"/>
</dbReference>
<dbReference type="FunFam" id="3.30.1330.20:FF:000001">
    <property type="entry name" value="Tubulin alpha chain"/>
    <property type="match status" value="1"/>
</dbReference>
<dbReference type="FunFam" id="3.40.50.1440:FF:000008">
    <property type="entry name" value="Tubulin alpha chain"/>
    <property type="match status" value="1"/>
</dbReference>
<dbReference type="Gene3D" id="1.10.287.600">
    <property type="entry name" value="Helix hairpin bin"/>
    <property type="match status" value="1"/>
</dbReference>
<dbReference type="Gene3D" id="3.30.1330.20">
    <property type="entry name" value="Tubulin/FtsZ, C-terminal domain"/>
    <property type="match status" value="1"/>
</dbReference>
<dbReference type="Gene3D" id="3.40.50.1440">
    <property type="entry name" value="Tubulin/FtsZ, GTPase domain"/>
    <property type="match status" value="1"/>
</dbReference>
<dbReference type="InterPro" id="IPR002452">
    <property type="entry name" value="Alpha_tubulin"/>
</dbReference>
<dbReference type="InterPro" id="IPR008280">
    <property type="entry name" value="Tub_FtsZ_C"/>
</dbReference>
<dbReference type="InterPro" id="IPR000217">
    <property type="entry name" value="Tubulin"/>
</dbReference>
<dbReference type="InterPro" id="IPR037103">
    <property type="entry name" value="Tubulin/FtsZ-like_C"/>
</dbReference>
<dbReference type="InterPro" id="IPR018316">
    <property type="entry name" value="Tubulin/FtsZ_2-layer-sand-dom"/>
</dbReference>
<dbReference type="InterPro" id="IPR036525">
    <property type="entry name" value="Tubulin/FtsZ_GTPase_sf"/>
</dbReference>
<dbReference type="InterPro" id="IPR023123">
    <property type="entry name" value="Tubulin_C"/>
</dbReference>
<dbReference type="InterPro" id="IPR017975">
    <property type="entry name" value="Tubulin_CS"/>
</dbReference>
<dbReference type="InterPro" id="IPR003008">
    <property type="entry name" value="Tubulin_FtsZ_GTPase"/>
</dbReference>
<dbReference type="PANTHER" id="PTHR11588">
    <property type="entry name" value="TUBULIN"/>
    <property type="match status" value="1"/>
</dbReference>
<dbReference type="Pfam" id="PF00091">
    <property type="entry name" value="Tubulin"/>
    <property type="match status" value="1"/>
</dbReference>
<dbReference type="Pfam" id="PF03953">
    <property type="entry name" value="Tubulin_C"/>
    <property type="match status" value="1"/>
</dbReference>
<dbReference type="PRINTS" id="PR01162">
    <property type="entry name" value="ALPHATUBULIN"/>
</dbReference>
<dbReference type="PRINTS" id="PR01161">
    <property type="entry name" value="TUBULIN"/>
</dbReference>
<dbReference type="SMART" id="SM00864">
    <property type="entry name" value="Tubulin"/>
    <property type="match status" value="1"/>
</dbReference>
<dbReference type="SMART" id="SM00865">
    <property type="entry name" value="Tubulin_C"/>
    <property type="match status" value="1"/>
</dbReference>
<dbReference type="SUPFAM" id="SSF55307">
    <property type="entry name" value="Tubulin C-terminal domain-like"/>
    <property type="match status" value="1"/>
</dbReference>
<dbReference type="SUPFAM" id="SSF52490">
    <property type="entry name" value="Tubulin nucleotide-binding domain-like"/>
    <property type="match status" value="1"/>
</dbReference>
<dbReference type="PROSITE" id="PS00227">
    <property type="entry name" value="TUBULIN"/>
    <property type="match status" value="1"/>
</dbReference>
<proteinExistence type="inferred from homology"/>
<organism>
    <name type="scientific">Pneumocystis carinii</name>
    <dbReference type="NCBI Taxonomy" id="4754"/>
    <lineage>
        <taxon>Eukaryota</taxon>
        <taxon>Fungi</taxon>
        <taxon>Dikarya</taxon>
        <taxon>Ascomycota</taxon>
        <taxon>Taphrinomycotina</taxon>
        <taxon>Pneumocystomycetes</taxon>
        <taxon>Pneumocystaceae</taxon>
        <taxon>Pneumocystis</taxon>
    </lineage>
</organism>
<accession>P53372</accession>
<keyword id="KW-0963">Cytoplasm</keyword>
<keyword id="KW-0206">Cytoskeleton</keyword>
<keyword id="KW-0342">GTP-binding</keyword>
<keyword id="KW-0378">Hydrolase</keyword>
<keyword id="KW-0460">Magnesium</keyword>
<keyword id="KW-0479">Metal-binding</keyword>
<keyword id="KW-0493">Microtubule</keyword>
<keyword id="KW-0547">Nucleotide-binding</keyword>
<reference key="1">
    <citation type="journal article" date="1993" name="Gene">
        <title>Cloning and characterization of an alpha-tubulin-encoding gene from rat-derived Pneumocystis carinii.</title>
        <authorList>
            <person name="Zhang J."/>
            <person name="Stringer J.R."/>
        </authorList>
    </citation>
    <scope>NUCLEOTIDE SEQUENCE [GENOMIC DNA]</scope>
</reference>
<sequence length="449" mass="50383">MREVISIHVGQAGTQIGNACWELYCLEHGIEPDGRLSPEKTTKPLDDGFSTFFSETGSGKYVPRSIYVDLEPNVIDQVRTGTYRHLFHPEQLITGKEDAANNYARGHYTVGKELIDHVLDRIRRVADNCTGLQGFLVFHSFGGGTGSGFGALLLERLSVDYGKKSKLEFSVYPAPQVSTSVVEPYNSILTTHTTLEHSDCSFMVDNEAIYDICRRNLDIERPGYENLNRLIAQVVSSITASLRFDGSLNVDLNEFQTNLVPYPRIHFPLVTYAPLISAAKAHHEANSVAEITNACFEPNNQMVKCDPRNGKYMATCLLYRGDIVTKDVNCAVSSIRTKRTIQFVDWCPTGFKLGVCYQPPQYVPNGDLAKVNRAVCMLSNTTSIAEAWSRLDHKFDLMYSKRAFVHWYVGEGMEEGEFSEAREDLAALEKDYEEVGQDSIEGEIMEEEY</sequence>